<protein>
    <recommendedName>
        <fullName evidence="1">Adenylate kinase</fullName>
        <shortName evidence="1">AK</shortName>
        <ecNumber evidence="1">2.7.4.3</ecNumber>
    </recommendedName>
    <alternativeName>
        <fullName evidence="1">ATP-AMP transphosphorylase</fullName>
    </alternativeName>
    <alternativeName>
        <fullName evidence="1">ATP:AMP phosphotransferase</fullName>
    </alternativeName>
    <alternativeName>
        <fullName evidence="1">Adenylate monophosphate kinase</fullName>
    </alternativeName>
</protein>
<evidence type="ECO:0000255" key="1">
    <source>
        <dbReference type="HAMAP-Rule" id="MF_00235"/>
    </source>
</evidence>
<feature type="chain" id="PRO_1000078281" description="Adenylate kinase">
    <location>
        <begin position="1"/>
        <end position="215"/>
    </location>
</feature>
<feature type="region of interest" description="NMP" evidence="1">
    <location>
        <begin position="30"/>
        <end position="59"/>
    </location>
</feature>
<feature type="region of interest" description="LID" evidence="1">
    <location>
        <begin position="122"/>
        <end position="159"/>
    </location>
</feature>
<feature type="binding site" evidence="1">
    <location>
        <begin position="10"/>
        <end position="15"/>
    </location>
    <ligand>
        <name>ATP</name>
        <dbReference type="ChEBI" id="CHEBI:30616"/>
    </ligand>
</feature>
<feature type="binding site" evidence="1">
    <location>
        <position position="31"/>
    </location>
    <ligand>
        <name>AMP</name>
        <dbReference type="ChEBI" id="CHEBI:456215"/>
    </ligand>
</feature>
<feature type="binding site" evidence="1">
    <location>
        <position position="36"/>
    </location>
    <ligand>
        <name>AMP</name>
        <dbReference type="ChEBI" id="CHEBI:456215"/>
    </ligand>
</feature>
<feature type="binding site" evidence="1">
    <location>
        <begin position="57"/>
        <end position="59"/>
    </location>
    <ligand>
        <name>AMP</name>
        <dbReference type="ChEBI" id="CHEBI:456215"/>
    </ligand>
</feature>
<feature type="binding site" evidence="1">
    <location>
        <begin position="85"/>
        <end position="88"/>
    </location>
    <ligand>
        <name>AMP</name>
        <dbReference type="ChEBI" id="CHEBI:456215"/>
    </ligand>
</feature>
<feature type="binding site" evidence="1">
    <location>
        <position position="92"/>
    </location>
    <ligand>
        <name>AMP</name>
        <dbReference type="ChEBI" id="CHEBI:456215"/>
    </ligand>
</feature>
<feature type="binding site" evidence="1">
    <location>
        <position position="123"/>
    </location>
    <ligand>
        <name>ATP</name>
        <dbReference type="ChEBI" id="CHEBI:30616"/>
    </ligand>
</feature>
<feature type="binding site" evidence="1">
    <location>
        <begin position="132"/>
        <end position="133"/>
    </location>
    <ligand>
        <name>ATP</name>
        <dbReference type="ChEBI" id="CHEBI:30616"/>
    </ligand>
</feature>
<feature type="binding site" evidence="1">
    <location>
        <position position="156"/>
    </location>
    <ligand>
        <name>AMP</name>
        <dbReference type="ChEBI" id="CHEBI:456215"/>
    </ligand>
</feature>
<feature type="binding site" evidence="1">
    <location>
        <position position="167"/>
    </location>
    <ligand>
        <name>AMP</name>
        <dbReference type="ChEBI" id="CHEBI:456215"/>
    </ligand>
</feature>
<feature type="binding site" evidence="1">
    <location>
        <position position="200"/>
    </location>
    <ligand>
        <name>ATP</name>
        <dbReference type="ChEBI" id="CHEBI:30616"/>
    </ligand>
</feature>
<dbReference type="EC" id="2.7.4.3" evidence="1"/>
<dbReference type="EMBL" id="CP000381">
    <property type="protein sequence ID" value="ABX72977.1"/>
    <property type="molecule type" value="Genomic_DNA"/>
</dbReference>
<dbReference type="RefSeq" id="WP_002213936.1">
    <property type="nucleotide sequence ID" value="NC_010120.1"/>
</dbReference>
<dbReference type="SMR" id="A9M3Q2"/>
<dbReference type="GeneID" id="93386353"/>
<dbReference type="KEGG" id="nmn:NMCC_0784"/>
<dbReference type="HOGENOM" id="CLU_032354_1_2_4"/>
<dbReference type="UniPathway" id="UPA00588">
    <property type="reaction ID" value="UER00649"/>
</dbReference>
<dbReference type="Proteomes" id="UP000001177">
    <property type="component" value="Chromosome"/>
</dbReference>
<dbReference type="GO" id="GO:0005737">
    <property type="term" value="C:cytoplasm"/>
    <property type="evidence" value="ECO:0007669"/>
    <property type="project" value="UniProtKB-SubCell"/>
</dbReference>
<dbReference type="GO" id="GO:0004017">
    <property type="term" value="F:adenylate kinase activity"/>
    <property type="evidence" value="ECO:0007669"/>
    <property type="project" value="UniProtKB-UniRule"/>
</dbReference>
<dbReference type="GO" id="GO:0005524">
    <property type="term" value="F:ATP binding"/>
    <property type="evidence" value="ECO:0007669"/>
    <property type="project" value="UniProtKB-UniRule"/>
</dbReference>
<dbReference type="GO" id="GO:0044209">
    <property type="term" value="P:AMP salvage"/>
    <property type="evidence" value="ECO:0007669"/>
    <property type="project" value="UniProtKB-UniRule"/>
</dbReference>
<dbReference type="CDD" id="cd01428">
    <property type="entry name" value="ADK"/>
    <property type="match status" value="1"/>
</dbReference>
<dbReference type="FunFam" id="3.40.50.300:FF:000106">
    <property type="entry name" value="Adenylate kinase mitochondrial"/>
    <property type="match status" value="1"/>
</dbReference>
<dbReference type="Gene3D" id="3.40.50.300">
    <property type="entry name" value="P-loop containing nucleotide triphosphate hydrolases"/>
    <property type="match status" value="1"/>
</dbReference>
<dbReference type="HAMAP" id="MF_00235">
    <property type="entry name" value="Adenylate_kinase_Adk"/>
    <property type="match status" value="1"/>
</dbReference>
<dbReference type="InterPro" id="IPR006259">
    <property type="entry name" value="Adenyl_kin_sub"/>
</dbReference>
<dbReference type="InterPro" id="IPR000850">
    <property type="entry name" value="Adenylat/UMP-CMP_kin"/>
</dbReference>
<dbReference type="InterPro" id="IPR033690">
    <property type="entry name" value="Adenylat_kinase_CS"/>
</dbReference>
<dbReference type="InterPro" id="IPR007862">
    <property type="entry name" value="Adenylate_kinase_lid-dom"/>
</dbReference>
<dbReference type="InterPro" id="IPR027417">
    <property type="entry name" value="P-loop_NTPase"/>
</dbReference>
<dbReference type="NCBIfam" id="TIGR01351">
    <property type="entry name" value="adk"/>
    <property type="match status" value="1"/>
</dbReference>
<dbReference type="NCBIfam" id="NF001379">
    <property type="entry name" value="PRK00279.1-1"/>
    <property type="match status" value="1"/>
</dbReference>
<dbReference type="NCBIfam" id="NF001380">
    <property type="entry name" value="PRK00279.1-2"/>
    <property type="match status" value="1"/>
</dbReference>
<dbReference type="NCBIfam" id="NF001381">
    <property type="entry name" value="PRK00279.1-3"/>
    <property type="match status" value="1"/>
</dbReference>
<dbReference type="PANTHER" id="PTHR23359">
    <property type="entry name" value="NUCLEOTIDE KINASE"/>
    <property type="match status" value="1"/>
</dbReference>
<dbReference type="Pfam" id="PF00406">
    <property type="entry name" value="ADK"/>
    <property type="match status" value="1"/>
</dbReference>
<dbReference type="Pfam" id="PF05191">
    <property type="entry name" value="ADK_lid"/>
    <property type="match status" value="1"/>
</dbReference>
<dbReference type="PRINTS" id="PR00094">
    <property type="entry name" value="ADENYLTKNASE"/>
</dbReference>
<dbReference type="SUPFAM" id="SSF52540">
    <property type="entry name" value="P-loop containing nucleoside triphosphate hydrolases"/>
    <property type="match status" value="1"/>
</dbReference>
<dbReference type="PROSITE" id="PS00113">
    <property type="entry name" value="ADENYLATE_KINASE"/>
    <property type="match status" value="1"/>
</dbReference>
<keyword id="KW-0067">ATP-binding</keyword>
<keyword id="KW-0963">Cytoplasm</keyword>
<keyword id="KW-0418">Kinase</keyword>
<keyword id="KW-0545">Nucleotide biosynthesis</keyword>
<keyword id="KW-0547">Nucleotide-binding</keyword>
<keyword id="KW-0808">Transferase</keyword>
<proteinExistence type="inferred from homology"/>
<accession>A9M3Q2</accession>
<name>KAD_NEIM0</name>
<organism>
    <name type="scientific">Neisseria meningitidis serogroup C (strain 053442)</name>
    <dbReference type="NCBI Taxonomy" id="374833"/>
    <lineage>
        <taxon>Bacteria</taxon>
        <taxon>Pseudomonadati</taxon>
        <taxon>Pseudomonadota</taxon>
        <taxon>Betaproteobacteria</taxon>
        <taxon>Neisseriales</taxon>
        <taxon>Neisseriaceae</taxon>
        <taxon>Neisseria</taxon>
    </lineage>
</organism>
<gene>
    <name evidence="1" type="primary">adk</name>
    <name type="ordered locus">NMCC_0784</name>
</gene>
<reference key="1">
    <citation type="journal article" date="2008" name="Genomics">
        <title>Characterization of ST-4821 complex, a unique Neisseria meningitidis clone.</title>
        <authorList>
            <person name="Peng J."/>
            <person name="Yang L."/>
            <person name="Yang F."/>
            <person name="Yang J."/>
            <person name="Yan Y."/>
            <person name="Nie H."/>
            <person name="Zhang X."/>
            <person name="Xiong Z."/>
            <person name="Jiang Y."/>
            <person name="Cheng F."/>
            <person name="Xu X."/>
            <person name="Chen S."/>
            <person name="Sun L."/>
            <person name="Li W."/>
            <person name="Shen Y."/>
            <person name="Shao Z."/>
            <person name="Liang X."/>
            <person name="Xu J."/>
            <person name="Jin Q."/>
        </authorList>
    </citation>
    <scope>NUCLEOTIDE SEQUENCE [LARGE SCALE GENOMIC DNA]</scope>
    <source>
        <strain>053442</strain>
    </source>
</reference>
<sequence>MKALLLGAPGAGKGTQAQFITAAFGIPQISTGDMLRAAIKAGTPLGLEAKKIIDEGGLVRDDIIIGMVKERIAQDDCKNGFLFDGFPRTLAQAEAMVEAGVDLDAVVEIDVPDSVIVDRMSGRRVHLASGRTYHVTYNPPKVEGKDDVTGEDLIQRDDDKEETVKKRLAVYHEQTEVLVDFYSKLEGEHAPKYIKVDGTQPVEAVKAEVLGALGK</sequence>
<comment type="function">
    <text evidence="1">Catalyzes the reversible transfer of the terminal phosphate group between ATP and AMP. Plays an important role in cellular energy homeostasis and in adenine nucleotide metabolism.</text>
</comment>
<comment type="catalytic activity">
    <reaction evidence="1">
        <text>AMP + ATP = 2 ADP</text>
        <dbReference type="Rhea" id="RHEA:12973"/>
        <dbReference type="ChEBI" id="CHEBI:30616"/>
        <dbReference type="ChEBI" id="CHEBI:456215"/>
        <dbReference type="ChEBI" id="CHEBI:456216"/>
        <dbReference type="EC" id="2.7.4.3"/>
    </reaction>
</comment>
<comment type="pathway">
    <text evidence="1">Purine metabolism; AMP biosynthesis via salvage pathway; AMP from ADP: step 1/1.</text>
</comment>
<comment type="subunit">
    <text evidence="1">Monomer.</text>
</comment>
<comment type="subcellular location">
    <subcellularLocation>
        <location evidence="1">Cytoplasm</location>
    </subcellularLocation>
</comment>
<comment type="domain">
    <text evidence="1">Consists of three domains, a large central CORE domain and two small peripheral domains, NMPbind and LID, which undergo movements during catalysis. The LID domain closes over the site of phosphoryl transfer upon ATP binding. Assembling and dissambling the active center during each catalytic cycle provides an effective means to prevent ATP hydrolysis.</text>
</comment>
<comment type="similarity">
    <text evidence="1">Belongs to the adenylate kinase family.</text>
</comment>